<gene>
    <name evidence="1" type="primary">aspS</name>
    <name type="ordered locus">SaurJH1_1720</name>
</gene>
<keyword id="KW-0030">Aminoacyl-tRNA synthetase</keyword>
<keyword id="KW-0067">ATP-binding</keyword>
<keyword id="KW-0963">Cytoplasm</keyword>
<keyword id="KW-0436">Ligase</keyword>
<keyword id="KW-0547">Nucleotide-binding</keyword>
<keyword id="KW-0648">Protein biosynthesis</keyword>
<organism>
    <name type="scientific">Staphylococcus aureus (strain JH1)</name>
    <dbReference type="NCBI Taxonomy" id="359787"/>
    <lineage>
        <taxon>Bacteria</taxon>
        <taxon>Bacillati</taxon>
        <taxon>Bacillota</taxon>
        <taxon>Bacilli</taxon>
        <taxon>Bacillales</taxon>
        <taxon>Staphylococcaceae</taxon>
        <taxon>Staphylococcus</taxon>
    </lineage>
</organism>
<proteinExistence type="inferred from homology"/>
<name>SYD_STAA2</name>
<dbReference type="EC" id="6.1.1.12" evidence="1"/>
<dbReference type="EMBL" id="CP000736">
    <property type="protein sequence ID" value="ABR52566.1"/>
    <property type="molecule type" value="Genomic_DNA"/>
</dbReference>
<dbReference type="SMR" id="A6U298"/>
<dbReference type="KEGG" id="sah:SaurJH1_1720"/>
<dbReference type="HOGENOM" id="CLU_014330_3_2_9"/>
<dbReference type="GO" id="GO:0005737">
    <property type="term" value="C:cytoplasm"/>
    <property type="evidence" value="ECO:0007669"/>
    <property type="project" value="UniProtKB-SubCell"/>
</dbReference>
<dbReference type="GO" id="GO:0004815">
    <property type="term" value="F:aspartate-tRNA ligase activity"/>
    <property type="evidence" value="ECO:0007669"/>
    <property type="project" value="UniProtKB-UniRule"/>
</dbReference>
<dbReference type="GO" id="GO:0005524">
    <property type="term" value="F:ATP binding"/>
    <property type="evidence" value="ECO:0007669"/>
    <property type="project" value="UniProtKB-UniRule"/>
</dbReference>
<dbReference type="GO" id="GO:0140096">
    <property type="term" value="F:catalytic activity, acting on a protein"/>
    <property type="evidence" value="ECO:0007669"/>
    <property type="project" value="UniProtKB-ARBA"/>
</dbReference>
<dbReference type="GO" id="GO:0003676">
    <property type="term" value="F:nucleic acid binding"/>
    <property type="evidence" value="ECO:0007669"/>
    <property type="project" value="InterPro"/>
</dbReference>
<dbReference type="GO" id="GO:0016740">
    <property type="term" value="F:transferase activity"/>
    <property type="evidence" value="ECO:0007669"/>
    <property type="project" value="UniProtKB-ARBA"/>
</dbReference>
<dbReference type="GO" id="GO:0006422">
    <property type="term" value="P:aspartyl-tRNA aminoacylation"/>
    <property type="evidence" value="ECO:0007669"/>
    <property type="project" value="UniProtKB-UniRule"/>
</dbReference>
<dbReference type="CDD" id="cd00777">
    <property type="entry name" value="AspRS_core"/>
    <property type="match status" value="1"/>
</dbReference>
<dbReference type="CDD" id="cd04317">
    <property type="entry name" value="EcAspRS_like_N"/>
    <property type="match status" value="1"/>
</dbReference>
<dbReference type="Gene3D" id="3.30.930.10">
    <property type="entry name" value="Bira Bifunctional Protein, Domain 2"/>
    <property type="match status" value="1"/>
</dbReference>
<dbReference type="Gene3D" id="3.30.1360.30">
    <property type="entry name" value="GAD-like domain"/>
    <property type="match status" value="1"/>
</dbReference>
<dbReference type="Gene3D" id="2.40.50.140">
    <property type="entry name" value="Nucleic acid-binding proteins"/>
    <property type="match status" value="1"/>
</dbReference>
<dbReference type="HAMAP" id="MF_00044">
    <property type="entry name" value="Asp_tRNA_synth_type1"/>
    <property type="match status" value="1"/>
</dbReference>
<dbReference type="InterPro" id="IPR004364">
    <property type="entry name" value="Aa-tRNA-synt_II"/>
</dbReference>
<dbReference type="InterPro" id="IPR006195">
    <property type="entry name" value="aa-tRNA-synth_II"/>
</dbReference>
<dbReference type="InterPro" id="IPR045864">
    <property type="entry name" value="aa-tRNA-synth_II/BPL/LPL"/>
</dbReference>
<dbReference type="InterPro" id="IPR004524">
    <property type="entry name" value="Asp-tRNA-ligase_1"/>
</dbReference>
<dbReference type="InterPro" id="IPR047089">
    <property type="entry name" value="Asp-tRNA-ligase_1_N"/>
</dbReference>
<dbReference type="InterPro" id="IPR002312">
    <property type="entry name" value="Asp/Asn-tRNA-synth_IIb"/>
</dbReference>
<dbReference type="InterPro" id="IPR047090">
    <property type="entry name" value="AspRS_core"/>
</dbReference>
<dbReference type="InterPro" id="IPR004115">
    <property type="entry name" value="GAD-like_sf"/>
</dbReference>
<dbReference type="InterPro" id="IPR029351">
    <property type="entry name" value="GAD_dom"/>
</dbReference>
<dbReference type="InterPro" id="IPR012340">
    <property type="entry name" value="NA-bd_OB-fold"/>
</dbReference>
<dbReference type="InterPro" id="IPR004365">
    <property type="entry name" value="NA-bd_OB_tRNA"/>
</dbReference>
<dbReference type="NCBIfam" id="TIGR00459">
    <property type="entry name" value="aspS_bact"/>
    <property type="match status" value="1"/>
</dbReference>
<dbReference type="NCBIfam" id="NF001750">
    <property type="entry name" value="PRK00476.1"/>
    <property type="match status" value="1"/>
</dbReference>
<dbReference type="PANTHER" id="PTHR22594:SF5">
    <property type="entry name" value="ASPARTATE--TRNA LIGASE, MITOCHONDRIAL"/>
    <property type="match status" value="1"/>
</dbReference>
<dbReference type="PANTHER" id="PTHR22594">
    <property type="entry name" value="ASPARTYL/LYSYL-TRNA SYNTHETASE"/>
    <property type="match status" value="1"/>
</dbReference>
<dbReference type="Pfam" id="PF02938">
    <property type="entry name" value="GAD"/>
    <property type="match status" value="1"/>
</dbReference>
<dbReference type="Pfam" id="PF00152">
    <property type="entry name" value="tRNA-synt_2"/>
    <property type="match status" value="1"/>
</dbReference>
<dbReference type="Pfam" id="PF01336">
    <property type="entry name" value="tRNA_anti-codon"/>
    <property type="match status" value="1"/>
</dbReference>
<dbReference type="PRINTS" id="PR01042">
    <property type="entry name" value="TRNASYNTHASP"/>
</dbReference>
<dbReference type="SUPFAM" id="SSF55681">
    <property type="entry name" value="Class II aaRS and biotin synthetases"/>
    <property type="match status" value="1"/>
</dbReference>
<dbReference type="SUPFAM" id="SSF55261">
    <property type="entry name" value="GAD domain-like"/>
    <property type="match status" value="1"/>
</dbReference>
<dbReference type="SUPFAM" id="SSF50249">
    <property type="entry name" value="Nucleic acid-binding proteins"/>
    <property type="match status" value="1"/>
</dbReference>
<dbReference type="PROSITE" id="PS50862">
    <property type="entry name" value="AA_TRNA_LIGASE_II"/>
    <property type="match status" value="1"/>
</dbReference>
<evidence type="ECO:0000255" key="1">
    <source>
        <dbReference type="HAMAP-Rule" id="MF_00044"/>
    </source>
</evidence>
<accession>A6U298</accession>
<sequence length="588" mass="66599">MSKRTTYCGLVTEAFLGQEITLKGWVNNRRDLGGLIFVDLRDREGIVQVVFNPAFSEEALKIAETVRSEYVVEVQGTVTKRDPETVNPKIKTGQVEVQVTNIKVINKSETPPFSINEENVNVDENIRLKYRYLDLRRQELAQTFKMRHQITRSIRQYLDDEGFFDIETPVLTKSTPEGARDYLVPSRVHDGEFYALPQSPQLFKQLLMISGFDKYYQIVKCFRDEDLRADRQPEFTQVDIEMSFVDQEDVMQMGEEMLKKVVKEVKGVEINGAFPRMTYKEAMRRYGSDKPDTRFEMELIDVSQLGRDMDFKVFKDTVENDGEIKAIVAKGAAEQYTRKDMDALTEFVNIYGAKGLAWVKVVEDGLTGPIGRFFETENVETLLTLTGAEAGDLVMFVADKPNVVAQSLGALRVKLAKELGLIDETKLNFLWVTDWPLLEYDEDAKRYVAAHHPFTSPKEADIAKLGTAPEEAEANAYDIVLNGYELGGGSIRIHDGELQEKMFEVLGFTKEQAQEQFGFLLDAFKYGAPPHGGIALGLDRLVMLLTNRTNLRDTIAFPKTASATCLLTNAPGEVSDKQLEELSLRIRH</sequence>
<reference key="1">
    <citation type="submission" date="2007-06" db="EMBL/GenBank/DDBJ databases">
        <title>Complete sequence of chromosome of Staphylococcus aureus subsp. aureus JH1.</title>
        <authorList>
            <consortium name="US DOE Joint Genome Institute"/>
            <person name="Copeland A."/>
            <person name="Lucas S."/>
            <person name="Lapidus A."/>
            <person name="Barry K."/>
            <person name="Detter J.C."/>
            <person name="Glavina del Rio T."/>
            <person name="Hammon N."/>
            <person name="Israni S."/>
            <person name="Dalin E."/>
            <person name="Tice H."/>
            <person name="Pitluck S."/>
            <person name="Chain P."/>
            <person name="Malfatti S."/>
            <person name="Shin M."/>
            <person name="Vergez L."/>
            <person name="Schmutz J."/>
            <person name="Larimer F."/>
            <person name="Land M."/>
            <person name="Hauser L."/>
            <person name="Kyrpides N."/>
            <person name="Ivanova N."/>
            <person name="Tomasz A."/>
            <person name="Richardson P."/>
        </authorList>
    </citation>
    <scope>NUCLEOTIDE SEQUENCE [LARGE SCALE GENOMIC DNA]</scope>
    <source>
        <strain>JH1</strain>
    </source>
</reference>
<protein>
    <recommendedName>
        <fullName evidence="1">Aspartate--tRNA ligase</fullName>
        <ecNumber evidence="1">6.1.1.12</ecNumber>
    </recommendedName>
    <alternativeName>
        <fullName evidence="1">Aspartyl-tRNA synthetase</fullName>
        <shortName evidence="1">AspRS</shortName>
    </alternativeName>
</protein>
<feature type="chain" id="PRO_1000074724" description="Aspartate--tRNA ligase">
    <location>
        <begin position="1"/>
        <end position="588"/>
    </location>
</feature>
<feature type="region of interest" description="Aspartate" evidence="1">
    <location>
        <begin position="201"/>
        <end position="204"/>
    </location>
</feature>
<feature type="binding site" evidence="1">
    <location>
        <position position="177"/>
    </location>
    <ligand>
        <name>L-aspartate</name>
        <dbReference type="ChEBI" id="CHEBI:29991"/>
    </ligand>
</feature>
<feature type="binding site" evidence="1">
    <location>
        <begin position="223"/>
        <end position="225"/>
    </location>
    <ligand>
        <name>ATP</name>
        <dbReference type="ChEBI" id="CHEBI:30616"/>
    </ligand>
</feature>
<feature type="binding site" evidence="1">
    <location>
        <position position="223"/>
    </location>
    <ligand>
        <name>L-aspartate</name>
        <dbReference type="ChEBI" id="CHEBI:29991"/>
    </ligand>
</feature>
<feature type="binding site" evidence="1">
    <location>
        <position position="232"/>
    </location>
    <ligand>
        <name>ATP</name>
        <dbReference type="ChEBI" id="CHEBI:30616"/>
    </ligand>
</feature>
<feature type="binding site" evidence="1">
    <location>
        <position position="451"/>
    </location>
    <ligand>
        <name>L-aspartate</name>
        <dbReference type="ChEBI" id="CHEBI:29991"/>
    </ligand>
</feature>
<feature type="binding site" evidence="1">
    <location>
        <position position="485"/>
    </location>
    <ligand>
        <name>ATP</name>
        <dbReference type="ChEBI" id="CHEBI:30616"/>
    </ligand>
</feature>
<feature type="binding site" evidence="1">
    <location>
        <position position="492"/>
    </location>
    <ligand>
        <name>L-aspartate</name>
        <dbReference type="ChEBI" id="CHEBI:29991"/>
    </ligand>
</feature>
<feature type="binding site" evidence="1">
    <location>
        <begin position="537"/>
        <end position="540"/>
    </location>
    <ligand>
        <name>ATP</name>
        <dbReference type="ChEBI" id="CHEBI:30616"/>
    </ligand>
</feature>
<comment type="function">
    <text evidence="1">Catalyzes the attachment of L-aspartate to tRNA(Asp) in a two-step reaction: L-aspartate is first activated by ATP to form Asp-AMP and then transferred to the acceptor end of tRNA(Asp).</text>
</comment>
<comment type="catalytic activity">
    <reaction evidence="1">
        <text>tRNA(Asp) + L-aspartate + ATP = L-aspartyl-tRNA(Asp) + AMP + diphosphate</text>
        <dbReference type="Rhea" id="RHEA:19649"/>
        <dbReference type="Rhea" id="RHEA-COMP:9660"/>
        <dbReference type="Rhea" id="RHEA-COMP:9678"/>
        <dbReference type="ChEBI" id="CHEBI:29991"/>
        <dbReference type="ChEBI" id="CHEBI:30616"/>
        <dbReference type="ChEBI" id="CHEBI:33019"/>
        <dbReference type="ChEBI" id="CHEBI:78442"/>
        <dbReference type="ChEBI" id="CHEBI:78516"/>
        <dbReference type="ChEBI" id="CHEBI:456215"/>
        <dbReference type="EC" id="6.1.1.12"/>
    </reaction>
</comment>
<comment type="subunit">
    <text evidence="1">Homodimer.</text>
</comment>
<comment type="subcellular location">
    <subcellularLocation>
        <location evidence="1">Cytoplasm</location>
    </subcellularLocation>
</comment>
<comment type="similarity">
    <text evidence="1">Belongs to the class-II aminoacyl-tRNA synthetase family. Type 1 subfamily.</text>
</comment>